<proteinExistence type="evidence at transcript level"/>
<comment type="function">
    <text evidence="2 3 4">Subunit of the V1 complex of vacuolar(H+)-ATPase (V-ATPase), a multisubunit enzyme composed of a peripheral complex (V1) that hydrolyzes ATP and a membrane integral complex (V0) that translocates protons (By similarity). V-ATPase is responsible for acidifying and maintaining the pH of intracellular compartments and in some cell types, is targeted to the plasma membrane, where it is responsible for acidifying the extracellular environment (By similarity). Subunit C is necessary for the assembly of the catalytic sector of the enzyme and is likely to have a specific function in its catalytic activity (By similarity).</text>
</comment>
<comment type="subunit">
    <text evidence="3">V-ATPase is a heteromultimeric enzyme made up of two complexes: the ATP-hydrolytic V1 complex and the proton translocation V0 complex (By similarity). The V1 complex consists of three catalytic AB heterodimers that form a heterohexamer, three peripheral stalks each consisting of EG heterodimers, one central rotor including subunits D and F, and the regulatory subunits C and H (By similarity). The proton translocation complex V0 consists of the proton transport subunit a, a ring of proteolipid subunits c9c'', rotary subunit d, subunits e and f, and two accessory subunits (By similarity).</text>
</comment>
<comment type="similarity">
    <text evidence="5">Belongs to the V-ATPase C subunit family.</text>
</comment>
<evidence type="ECO:0000250" key="1"/>
<evidence type="ECO:0000250" key="2">
    <source>
        <dbReference type="UniProtKB" id="P21282"/>
    </source>
</evidence>
<evidence type="ECO:0000250" key="3">
    <source>
        <dbReference type="UniProtKB" id="P21283"/>
    </source>
</evidence>
<evidence type="ECO:0000250" key="4">
    <source>
        <dbReference type="UniProtKB" id="P31412"/>
    </source>
</evidence>
<evidence type="ECO:0000305" key="5"/>
<protein>
    <recommendedName>
        <fullName>V-type proton ATPase subunit C 1</fullName>
        <shortName>V-ATPase subunit C 1</shortName>
    </recommendedName>
    <alternativeName>
        <fullName>Vacuolar proton pump subunit C 1</fullName>
    </alternativeName>
</protein>
<feature type="initiator methionine" description="Removed" evidence="1">
    <location>
        <position position="1"/>
    </location>
</feature>
<feature type="chain" id="PRO_0000285668" description="V-type proton ATPase subunit C 1">
    <location>
        <begin position="2"/>
        <end position="382"/>
    </location>
</feature>
<feature type="modified residue" description="N-acetylthreonine" evidence="1">
    <location>
        <position position="2"/>
    </location>
</feature>
<keyword id="KW-0007">Acetylation</keyword>
<keyword id="KW-0375">Hydrogen ion transport</keyword>
<keyword id="KW-0406">Ion transport</keyword>
<keyword id="KW-1185">Reference proteome</keyword>
<keyword id="KW-0813">Transport</keyword>
<accession>Q5XH14</accession>
<dbReference type="EMBL" id="BC084262">
    <property type="protein sequence ID" value="AAH84262.1"/>
    <property type="molecule type" value="mRNA"/>
</dbReference>
<dbReference type="RefSeq" id="NP_001088261.1">
    <property type="nucleotide sequence ID" value="NM_001094792.1"/>
</dbReference>
<dbReference type="RefSeq" id="XP_018122121.1">
    <property type="nucleotide sequence ID" value="XM_018266632.1"/>
</dbReference>
<dbReference type="SMR" id="Q5XH14"/>
<dbReference type="DNASU" id="495092"/>
<dbReference type="GeneID" id="495092"/>
<dbReference type="KEGG" id="xla:495092"/>
<dbReference type="AGR" id="Xenbase:XB-GENE-948415"/>
<dbReference type="CTD" id="495092"/>
<dbReference type="Xenbase" id="XB-GENE-948415">
    <property type="gene designation" value="atp6v1c1.L"/>
</dbReference>
<dbReference type="OMA" id="VMIWIHV"/>
<dbReference type="OrthoDB" id="6605928at2759"/>
<dbReference type="Proteomes" id="UP000186698">
    <property type="component" value="Chromosome 6L"/>
</dbReference>
<dbReference type="Bgee" id="495092">
    <property type="expression patterns" value="Expressed in brain and 19 other cell types or tissues"/>
</dbReference>
<dbReference type="GO" id="GO:0005765">
    <property type="term" value="C:lysosomal membrane"/>
    <property type="evidence" value="ECO:0007669"/>
    <property type="project" value="TreeGrafter"/>
</dbReference>
<dbReference type="GO" id="GO:0000221">
    <property type="term" value="C:vacuolar proton-transporting V-type ATPase, V1 domain"/>
    <property type="evidence" value="ECO:0000318"/>
    <property type="project" value="GO_Central"/>
</dbReference>
<dbReference type="GO" id="GO:0046961">
    <property type="term" value="F:proton-transporting ATPase activity, rotational mechanism"/>
    <property type="evidence" value="ECO:0000318"/>
    <property type="project" value="GO_Central"/>
</dbReference>
<dbReference type="CDD" id="cd14785">
    <property type="entry name" value="V-ATPase_C"/>
    <property type="match status" value="1"/>
</dbReference>
<dbReference type="FunFam" id="1.20.1460.10:FF:000004">
    <property type="entry name" value="V-type proton ATPase subunit C"/>
    <property type="match status" value="1"/>
</dbReference>
<dbReference type="FunFam" id="3.30.70.100:FF:000002">
    <property type="entry name" value="V-type proton ATPase subunit C"/>
    <property type="match status" value="1"/>
</dbReference>
<dbReference type="FunFam" id="3.30.70.1180:FF:000003">
    <property type="entry name" value="V-type proton ATPase subunit C"/>
    <property type="match status" value="1"/>
</dbReference>
<dbReference type="Gene3D" id="3.30.70.100">
    <property type="match status" value="1"/>
</dbReference>
<dbReference type="Gene3D" id="1.20.1460.10">
    <property type="entry name" value="subunit c (vma5p) of the yeast v-atpase, domain 2"/>
    <property type="match status" value="1"/>
</dbReference>
<dbReference type="Gene3D" id="3.30.70.1180">
    <property type="entry name" value="Vacuolar atp synthase subunit c, domain 1"/>
    <property type="match status" value="1"/>
</dbReference>
<dbReference type="InterPro" id="IPR004907">
    <property type="entry name" value="ATPase_V1-cplx_csu"/>
</dbReference>
<dbReference type="InterPro" id="IPR036132">
    <property type="entry name" value="Vac_ATP_synth_c_sf"/>
</dbReference>
<dbReference type="PANTHER" id="PTHR10137">
    <property type="entry name" value="V-TYPE PROTON ATPASE SUBUNIT C"/>
    <property type="match status" value="1"/>
</dbReference>
<dbReference type="PANTHER" id="PTHR10137:SF5">
    <property type="entry name" value="V-TYPE PROTON ATPASE SUBUNIT C 1"/>
    <property type="match status" value="1"/>
</dbReference>
<dbReference type="Pfam" id="PF03223">
    <property type="entry name" value="V-ATPase_C"/>
    <property type="match status" value="1"/>
</dbReference>
<dbReference type="SUPFAM" id="SSF118203">
    <property type="entry name" value="Vacuolar ATP synthase subunit C"/>
    <property type="match status" value="1"/>
</dbReference>
<reference key="1">
    <citation type="submission" date="2004-10" db="EMBL/GenBank/DDBJ databases">
        <authorList>
            <consortium name="NIH - Xenopus Gene Collection (XGC) project"/>
        </authorList>
    </citation>
    <scope>NUCLEOTIDE SEQUENCE [LARGE SCALE MRNA]</scope>
    <source>
        <tissue>Kidney</tissue>
    </source>
</reference>
<gene>
    <name type="primary">atp6v1c1</name>
</gene>
<organism>
    <name type="scientific">Xenopus laevis</name>
    <name type="common">African clawed frog</name>
    <dbReference type="NCBI Taxonomy" id="8355"/>
    <lineage>
        <taxon>Eukaryota</taxon>
        <taxon>Metazoa</taxon>
        <taxon>Chordata</taxon>
        <taxon>Craniata</taxon>
        <taxon>Vertebrata</taxon>
        <taxon>Euteleostomi</taxon>
        <taxon>Amphibia</taxon>
        <taxon>Batrachia</taxon>
        <taxon>Anura</taxon>
        <taxon>Pipoidea</taxon>
        <taxon>Pipidae</taxon>
        <taxon>Xenopodinae</taxon>
        <taxon>Xenopus</taxon>
        <taxon>Xenopus</taxon>
    </lineage>
</organism>
<name>VATC1_XENLA</name>
<sequence>MTEFWLISAPGEKTCQQTWEKLMAATTKNNNLSTNAKFNIPDLKVGTLDVLVGLSDELAKLDAFVEGAVKKVAQYMADVLEDSRDKVQENLLANGVDLVTYITRFQWDMAKYPIKQSLKNISEIIAKGVTQIDNDLKARASAYNNLKGNLQNLERKNAGSLITRSLAEIVKKDDFVLDSEYLITLLVVVPKNNYTDWMKEYETLSEMVVPRSSNVLSEDQDSYLCNVTLFRKAVDDFRHKARENKFVVRDFQYNEEEMKADKEEMNRLSTDKKKQFGPLVRWLKVNFSEAFIAWIHVKALRVFVESVLRYGLPVNFQAMLLQPNKKTMKKLREVLNDLYKHLDSSAASIIDAPMDIPGLNLSQQEYYPYVYYKIDCNLLEFK</sequence>